<protein>
    <recommendedName>
        <fullName evidence="1">Large ribosomal subunit protein uL2</fullName>
    </recommendedName>
    <alternativeName>
        <fullName evidence="3">50S ribosomal protein L2</fullName>
    </alternativeName>
</protein>
<reference key="1">
    <citation type="journal article" date="2004" name="J. Bacteriol.">
        <title>Complete genome sequence of the genetically tractable hydrogenotrophic methanogen Methanococcus maripaludis.</title>
        <authorList>
            <person name="Hendrickson E.L."/>
            <person name="Kaul R."/>
            <person name="Zhou Y."/>
            <person name="Bovee D."/>
            <person name="Chapman P."/>
            <person name="Chung J."/>
            <person name="Conway de Macario E."/>
            <person name="Dodsworth J.A."/>
            <person name="Gillett W."/>
            <person name="Graham D.E."/>
            <person name="Hackett M."/>
            <person name="Haydock A.K."/>
            <person name="Kang A."/>
            <person name="Land M.L."/>
            <person name="Levy R."/>
            <person name="Lie T.J."/>
            <person name="Major T.A."/>
            <person name="Moore B.C."/>
            <person name="Porat I."/>
            <person name="Palmeiri A."/>
            <person name="Rouse G."/>
            <person name="Saenphimmachak C."/>
            <person name="Soell D."/>
            <person name="Van Dien S."/>
            <person name="Wang T."/>
            <person name="Whitman W.B."/>
            <person name="Xia Q."/>
            <person name="Zhang Y."/>
            <person name="Larimer F.W."/>
            <person name="Olson M.V."/>
            <person name="Leigh J.A."/>
        </authorList>
    </citation>
    <scope>NUCLEOTIDE SEQUENCE [LARGE SCALE GENOMIC DNA]</scope>
    <source>
        <strain>DSM 14266 / JCM 13030 / NBRC 101832 / S2 / LL</strain>
    </source>
</reference>
<accession>Q6LX08</accession>
<organism>
    <name type="scientific">Methanococcus maripaludis (strain DSM 14266 / JCM 13030 / NBRC 101832 / S2 / LL)</name>
    <dbReference type="NCBI Taxonomy" id="267377"/>
    <lineage>
        <taxon>Archaea</taxon>
        <taxon>Methanobacteriati</taxon>
        <taxon>Methanobacteriota</taxon>
        <taxon>Methanomada group</taxon>
        <taxon>Methanococci</taxon>
        <taxon>Methanococcales</taxon>
        <taxon>Methanococcaceae</taxon>
        <taxon>Methanococcus</taxon>
    </lineage>
</organism>
<feature type="chain" id="PRO_0000237289" description="Large ribosomal subunit protein uL2">
    <location>
        <begin position="1"/>
        <end position="240"/>
    </location>
</feature>
<feature type="region of interest" description="Disordered" evidence="2">
    <location>
        <begin position="1"/>
        <end position="25"/>
    </location>
</feature>
<feature type="region of interest" description="Disordered" evidence="2">
    <location>
        <begin position="207"/>
        <end position="240"/>
    </location>
</feature>
<feature type="compositionally biased region" description="Polar residues" evidence="2">
    <location>
        <begin position="1"/>
        <end position="11"/>
    </location>
</feature>
<feature type="compositionally biased region" description="Basic residues" evidence="2">
    <location>
        <begin position="13"/>
        <end position="25"/>
    </location>
</feature>
<feature type="compositionally biased region" description="Basic residues" evidence="2">
    <location>
        <begin position="224"/>
        <end position="240"/>
    </location>
</feature>
<comment type="function">
    <text evidence="1">One of the primary rRNA binding proteins. Required for association of the 30S and 50S subunits to form the 70S ribosome, for tRNA binding and peptide bond formation. It has been suggested to have peptidyltransferase activity; this is somewhat controversial. Makes several contacts with the 16S rRNA in the 70S ribosome.</text>
</comment>
<comment type="subunit">
    <text evidence="1">Part of the 50S ribosomal subunit. Forms a bridge to the 30S subunit in the 70S ribosome.</text>
</comment>
<comment type="similarity">
    <text evidence="1">Belongs to the universal ribosomal protein uL2 family.</text>
</comment>
<sequence>MGKRLISQNRGRGTPKYRSPTHKRKGAVKYRSYDEMEKDGKILGTVIDILHDPGRSAPVAKVKFANDEERLVLIPEGIQVGEEIECGISAEIKPGNVLPLGEIPEGIPVYNIETIPGDGGKLVRSGGCYAHVISHDVGKTIVRLPSGFSKVLNPACRATVGVVAGGGRKEKPFVKAGKKYHSLSAKAVAWPKVRGVAMNAVDHPYGGGRHQHIGKPSSVSRHTSPGRKVGHIASRRTGKR</sequence>
<proteinExistence type="inferred from homology"/>
<dbReference type="EMBL" id="BX950229">
    <property type="protein sequence ID" value="CAF31102.1"/>
    <property type="molecule type" value="Genomic_DNA"/>
</dbReference>
<dbReference type="RefSeq" id="WP_011171490.1">
    <property type="nucleotide sequence ID" value="NC_005791.1"/>
</dbReference>
<dbReference type="SMR" id="Q6LX08"/>
<dbReference type="STRING" id="267377.MMP1546"/>
<dbReference type="EnsemblBacteria" id="CAF31102">
    <property type="protein sequence ID" value="CAF31102"/>
    <property type="gene ID" value="MMP1546"/>
</dbReference>
<dbReference type="KEGG" id="mmp:MMP1546"/>
<dbReference type="PATRIC" id="fig|267377.15.peg.1583"/>
<dbReference type="eggNOG" id="arCOG04067">
    <property type="taxonomic scope" value="Archaea"/>
</dbReference>
<dbReference type="HOGENOM" id="CLU_036235_0_3_2"/>
<dbReference type="OrthoDB" id="5987at2157"/>
<dbReference type="Proteomes" id="UP000000590">
    <property type="component" value="Chromosome"/>
</dbReference>
<dbReference type="GO" id="GO:0022625">
    <property type="term" value="C:cytosolic large ribosomal subunit"/>
    <property type="evidence" value="ECO:0007669"/>
    <property type="project" value="TreeGrafter"/>
</dbReference>
<dbReference type="GO" id="GO:0019843">
    <property type="term" value="F:rRNA binding"/>
    <property type="evidence" value="ECO:0007669"/>
    <property type="project" value="UniProtKB-UniRule"/>
</dbReference>
<dbReference type="GO" id="GO:0003735">
    <property type="term" value="F:structural constituent of ribosome"/>
    <property type="evidence" value="ECO:0007669"/>
    <property type="project" value="InterPro"/>
</dbReference>
<dbReference type="GO" id="GO:0002181">
    <property type="term" value="P:cytoplasmic translation"/>
    <property type="evidence" value="ECO:0007669"/>
    <property type="project" value="TreeGrafter"/>
</dbReference>
<dbReference type="FunFam" id="2.40.50.140:FF:000020">
    <property type="entry name" value="60S ribosomal protein L2"/>
    <property type="match status" value="1"/>
</dbReference>
<dbReference type="FunFam" id="4.10.950.10:FF:000002">
    <property type="entry name" value="60S ribosomal protein L2"/>
    <property type="match status" value="1"/>
</dbReference>
<dbReference type="FunFam" id="2.30.30.30:FF:000006">
    <property type="entry name" value="60S ribosomal protein L8"/>
    <property type="match status" value="1"/>
</dbReference>
<dbReference type="Gene3D" id="2.30.30.30">
    <property type="match status" value="1"/>
</dbReference>
<dbReference type="Gene3D" id="2.40.50.140">
    <property type="entry name" value="Nucleic acid-binding proteins"/>
    <property type="match status" value="1"/>
</dbReference>
<dbReference type="Gene3D" id="4.10.950.10">
    <property type="entry name" value="Ribosomal protein L2, domain 3"/>
    <property type="match status" value="1"/>
</dbReference>
<dbReference type="HAMAP" id="MF_01320_A">
    <property type="entry name" value="Ribosomal_uL2_A"/>
    <property type="match status" value="1"/>
</dbReference>
<dbReference type="InterPro" id="IPR012340">
    <property type="entry name" value="NA-bd_OB-fold"/>
</dbReference>
<dbReference type="InterPro" id="IPR014722">
    <property type="entry name" value="Rib_uL2_dom2"/>
</dbReference>
<dbReference type="InterPro" id="IPR002171">
    <property type="entry name" value="Ribosomal_uL2"/>
</dbReference>
<dbReference type="InterPro" id="IPR023672">
    <property type="entry name" value="Ribosomal_uL2_arc_euk"/>
</dbReference>
<dbReference type="InterPro" id="IPR022669">
    <property type="entry name" value="Ribosomal_uL2_C"/>
</dbReference>
<dbReference type="InterPro" id="IPR022671">
    <property type="entry name" value="Ribosomal_uL2_CS"/>
</dbReference>
<dbReference type="InterPro" id="IPR014726">
    <property type="entry name" value="Ribosomal_uL2_dom3"/>
</dbReference>
<dbReference type="InterPro" id="IPR022666">
    <property type="entry name" value="Ribosomal_uL2_RNA-bd_dom"/>
</dbReference>
<dbReference type="InterPro" id="IPR008991">
    <property type="entry name" value="Translation_prot_SH3-like_sf"/>
</dbReference>
<dbReference type="NCBIfam" id="NF007180">
    <property type="entry name" value="PRK09612.1"/>
    <property type="match status" value="1"/>
</dbReference>
<dbReference type="PANTHER" id="PTHR13691:SF16">
    <property type="entry name" value="LARGE RIBOSOMAL SUBUNIT PROTEIN UL2"/>
    <property type="match status" value="1"/>
</dbReference>
<dbReference type="PANTHER" id="PTHR13691">
    <property type="entry name" value="RIBOSOMAL PROTEIN L2"/>
    <property type="match status" value="1"/>
</dbReference>
<dbReference type="Pfam" id="PF00181">
    <property type="entry name" value="Ribosomal_L2"/>
    <property type="match status" value="1"/>
</dbReference>
<dbReference type="Pfam" id="PF03947">
    <property type="entry name" value="Ribosomal_L2_C"/>
    <property type="match status" value="1"/>
</dbReference>
<dbReference type="PIRSF" id="PIRSF002158">
    <property type="entry name" value="Ribosomal_L2"/>
    <property type="match status" value="1"/>
</dbReference>
<dbReference type="SMART" id="SM01383">
    <property type="entry name" value="Ribosomal_L2"/>
    <property type="match status" value="1"/>
</dbReference>
<dbReference type="SMART" id="SM01382">
    <property type="entry name" value="Ribosomal_L2_C"/>
    <property type="match status" value="1"/>
</dbReference>
<dbReference type="SUPFAM" id="SSF50249">
    <property type="entry name" value="Nucleic acid-binding proteins"/>
    <property type="match status" value="1"/>
</dbReference>
<dbReference type="SUPFAM" id="SSF50104">
    <property type="entry name" value="Translation proteins SH3-like domain"/>
    <property type="match status" value="1"/>
</dbReference>
<dbReference type="PROSITE" id="PS00467">
    <property type="entry name" value="RIBOSOMAL_L2"/>
    <property type="match status" value="1"/>
</dbReference>
<name>RL2_METMP</name>
<gene>
    <name evidence="1" type="primary">rpl2</name>
    <name type="ordered locus">MMP1546</name>
</gene>
<evidence type="ECO:0000255" key="1">
    <source>
        <dbReference type="HAMAP-Rule" id="MF_01320"/>
    </source>
</evidence>
<evidence type="ECO:0000256" key="2">
    <source>
        <dbReference type="SAM" id="MobiDB-lite"/>
    </source>
</evidence>
<evidence type="ECO:0000305" key="3"/>
<keyword id="KW-1185">Reference proteome</keyword>
<keyword id="KW-0687">Ribonucleoprotein</keyword>
<keyword id="KW-0689">Ribosomal protein</keyword>
<keyword id="KW-0694">RNA-binding</keyword>
<keyword id="KW-0699">rRNA-binding</keyword>